<organism>
    <name type="scientific">Photorhabdus laumondii subsp. laumondii (strain DSM 15139 / CIP 105565 / TT01)</name>
    <name type="common">Photorhabdus luminescens subsp. laumondii</name>
    <dbReference type="NCBI Taxonomy" id="243265"/>
    <lineage>
        <taxon>Bacteria</taxon>
        <taxon>Pseudomonadati</taxon>
        <taxon>Pseudomonadota</taxon>
        <taxon>Gammaproteobacteria</taxon>
        <taxon>Enterobacterales</taxon>
        <taxon>Morganellaceae</taxon>
        <taxon>Photorhabdus</taxon>
    </lineage>
</organism>
<feature type="chain" id="PRO_0000178080" description="Apolipoprotein N-acyltransferase">
    <location>
        <begin position="1"/>
        <end position="509"/>
    </location>
</feature>
<feature type="transmembrane region" description="Helical" evidence="1">
    <location>
        <begin position="12"/>
        <end position="29"/>
    </location>
</feature>
<feature type="transmembrane region" description="Helical" evidence="1">
    <location>
        <begin position="57"/>
        <end position="77"/>
    </location>
</feature>
<feature type="transmembrane region" description="Helical" evidence="1">
    <location>
        <begin position="91"/>
        <end position="111"/>
    </location>
</feature>
<feature type="transmembrane region" description="Helical" evidence="1">
    <location>
        <begin position="124"/>
        <end position="144"/>
    </location>
</feature>
<feature type="transmembrane region" description="Helical" evidence="1">
    <location>
        <begin position="168"/>
        <end position="188"/>
    </location>
</feature>
<feature type="transmembrane region" description="Helical" evidence="1">
    <location>
        <begin position="192"/>
        <end position="212"/>
    </location>
</feature>
<feature type="transmembrane region" description="Helical" evidence="1">
    <location>
        <begin position="485"/>
        <end position="505"/>
    </location>
</feature>
<feature type="domain" description="CN hydrolase" evidence="1">
    <location>
        <begin position="227"/>
        <end position="475"/>
    </location>
</feature>
<feature type="active site" description="Proton acceptor" evidence="1">
    <location>
        <position position="267"/>
    </location>
</feature>
<feature type="active site" evidence="1">
    <location>
        <position position="334"/>
    </location>
</feature>
<feature type="active site" description="Nucleophile" evidence="1">
    <location>
        <position position="386"/>
    </location>
</feature>
<keyword id="KW-0012">Acyltransferase</keyword>
<keyword id="KW-0997">Cell inner membrane</keyword>
<keyword id="KW-1003">Cell membrane</keyword>
<keyword id="KW-0472">Membrane</keyword>
<keyword id="KW-1185">Reference proteome</keyword>
<keyword id="KW-0808">Transferase</keyword>
<keyword id="KW-0812">Transmembrane</keyword>
<keyword id="KW-1133">Transmembrane helix</keyword>
<protein>
    <recommendedName>
        <fullName evidence="1">Apolipoprotein N-acyltransferase</fullName>
        <shortName evidence="1">ALP N-acyltransferase</shortName>
        <ecNumber evidence="1">2.3.1.269</ecNumber>
    </recommendedName>
</protein>
<name>LNT_PHOLL</name>
<evidence type="ECO:0000255" key="1">
    <source>
        <dbReference type="HAMAP-Rule" id="MF_01148"/>
    </source>
</evidence>
<accession>Q7N750</accession>
<proteinExistence type="inferred from homology"/>
<dbReference type="EC" id="2.3.1.269" evidence="1"/>
<dbReference type="EMBL" id="BX571863">
    <property type="protein sequence ID" value="CAE13602.1"/>
    <property type="molecule type" value="Genomic_DNA"/>
</dbReference>
<dbReference type="RefSeq" id="WP_011145632.1">
    <property type="nucleotide sequence ID" value="NC_005126.1"/>
</dbReference>
<dbReference type="SMR" id="Q7N750"/>
<dbReference type="STRING" id="243265.plu1308"/>
<dbReference type="GeneID" id="48847586"/>
<dbReference type="KEGG" id="plu:plu1308"/>
<dbReference type="eggNOG" id="COG0815">
    <property type="taxonomic scope" value="Bacteria"/>
</dbReference>
<dbReference type="HOGENOM" id="CLU_019563_3_0_6"/>
<dbReference type="OrthoDB" id="9804277at2"/>
<dbReference type="UniPathway" id="UPA00666"/>
<dbReference type="Proteomes" id="UP000002514">
    <property type="component" value="Chromosome"/>
</dbReference>
<dbReference type="GO" id="GO:0005886">
    <property type="term" value="C:plasma membrane"/>
    <property type="evidence" value="ECO:0007669"/>
    <property type="project" value="UniProtKB-SubCell"/>
</dbReference>
<dbReference type="GO" id="GO:0016410">
    <property type="term" value="F:N-acyltransferase activity"/>
    <property type="evidence" value="ECO:0007669"/>
    <property type="project" value="UniProtKB-UniRule"/>
</dbReference>
<dbReference type="GO" id="GO:0042158">
    <property type="term" value="P:lipoprotein biosynthetic process"/>
    <property type="evidence" value="ECO:0007669"/>
    <property type="project" value="UniProtKB-UniRule"/>
</dbReference>
<dbReference type="CDD" id="cd07571">
    <property type="entry name" value="ALP_N-acyl_transferase"/>
    <property type="match status" value="1"/>
</dbReference>
<dbReference type="Gene3D" id="3.60.110.10">
    <property type="entry name" value="Carbon-nitrogen hydrolase"/>
    <property type="match status" value="1"/>
</dbReference>
<dbReference type="HAMAP" id="MF_01148">
    <property type="entry name" value="Lnt"/>
    <property type="match status" value="1"/>
</dbReference>
<dbReference type="InterPro" id="IPR004563">
    <property type="entry name" value="Apolipo_AcylTrfase"/>
</dbReference>
<dbReference type="InterPro" id="IPR003010">
    <property type="entry name" value="C-N_Hydrolase"/>
</dbReference>
<dbReference type="InterPro" id="IPR036526">
    <property type="entry name" value="C-N_Hydrolase_sf"/>
</dbReference>
<dbReference type="InterPro" id="IPR045378">
    <property type="entry name" value="LNT_N"/>
</dbReference>
<dbReference type="NCBIfam" id="TIGR00546">
    <property type="entry name" value="lnt"/>
    <property type="match status" value="1"/>
</dbReference>
<dbReference type="PANTHER" id="PTHR38686">
    <property type="entry name" value="APOLIPOPROTEIN N-ACYLTRANSFERASE"/>
    <property type="match status" value="1"/>
</dbReference>
<dbReference type="PANTHER" id="PTHR38686:SF1">
    <property type="entry name" value="APOLIPOPROTEIN N-ACYLTRANSFERASE"/>
    <property type="match status" value="1"/>
</dbReference>
<dbReference type="Pfam" id="PF00795">
    <property type="entry name" value="CN_hydrolase"/>
    <property type="match status" value="1"/>
</dbReference>
<dbReference type="Pfam" id="PF20154">
    <property type="entry name" value="LNT_N"/>
    <property type="match status" value="1"/>
</dbReference>
<dbReference type="SUPFAM" id="SSF56317">
    <property type="entry name" value="Carbon-nitrogen hydrolase"/>
    <property type="match status" value="1"/>
</dbReference>
<dbReference type="PROSITE" id="PS50263">
    <property type="entry name" value="CN_HYDROLASE"/>
    <property type="match status" value="1"/>
</dbReference>
<reference key="1">
    <citation type="journal article" date="2003" name="Nat. Biotechnol.">
        <title>The genome sequence of the entomopathogenic bacterium Photorhabdus luminescens.</title>
        <authorList>
            <person name="Duchaud E."/>
            <person name="Rusniok C."/>
            <person name="Frangeul L."/>
            <person name="Buchrieser C."/>
            <person name="Givaudan A."/>
            <person name="Taourit S."/>
            <person name="Bocs S."/>
            <person name="Boursaux-Eude C."/>
            <person name="Chandler M."/>
            <person name="Charles J.-F."/>
            <person name="Dassa E."/>
            <person name="Derose R."/>
            <person name="Derzelle S."/>
            <person name="Freyssinet G."/>
            <person name="Gaudriault S."/>
            <person name="Medigue C."/>
            <person name="Lanois A."/>
            <person name="Powell K."/>
            <person name="Siguier P."/>
            <person name="Vincent R."/>
            <person name="Wingate V."/>
            <person name="Zouine M."/>
            <person name="Glaser P."/>
            <person name="Boemare N."/>
            <person name="Danchin A."/>
            <person name="Kunst F."/>
        </authorList>
    </citation>
    <scope>NUCLEOTIDE SEQUENCE [LARGE SCALE GENOMIC DNA]</scope>
    <source>
        <strain>DSM 15139 / CIP 105565 / TT01</strain>
    </source>
</reference>
<comment type="function">
    <text evidence="1">Catalyzes the phospholipid dependent N-acylation of the N-terminal cysteine of apolipoprotein, the last step in lipoprotein maturation.</text>
</comment>
<comment type="catalytic activity">
    <reaction evidence="1">
        <text>N-terminal S-1,2-diacyl-sn-glyceryl-L-cysteinyl-[lipoprotein] + a glycerophospholipid = N-acyl-S-1,2-diacyl-sn-glyceryl-L-cysteinyl-[lipoprotein] + a 2-acyl-sn-glycero-3-phospholipid + H(+)</text>
        <dbReference type="Rhea" id="RHEA:48228"/>
        <dbReference type="Rhea" id="RHEA-COMP:14681"/>
        <dbReference type="Rhea" id="RHEA-COMP:14684"/>
        <dbReference type="ChEBI" id="CHEBI:15378"/>
        <dbReference type="ChEBI" id="CHEBI:136912"/>
        <dbReference type="ChEBI" id="CHEBI:140656"/>
        <dbReference type="ChEBI" id="CHEBI:140657"/>
        <dbReference type="ChEBI" id="CHEBI:140660"/>
        <dbReference type="EC" id="2.3.1.269"/>
    </reaction>
</comment>
<comment type="pathway">
    <text evidence="1">Protein modification; lipoprotein biosynthesis (N-acyl transfer).</text>
</comment>
<comment type="subcellular location">
    <subcellularLocation>
        <location evidence="1">Cell inner membrane</location>
        <topology evidence="1">Multi-pass membrane protein</topology>
    </subcellularLocation>
</comment>
<comment type="similarity">
    <text evidence="1">Belongs to the CN hydrolase family. Apolipoprotein N-acyltransferase subfamily.</text>
</comment>
<sequence length="509" mass="56965">MNKASLLNCQRLRALLALFFGASGTLAFSPFDFWPAAIISLFGLQLLTLNRTPRQAAFIAFCWGFGLFGSGTNWVYVSIANFGGMPTTVNILLVILLAAYLSLYPALFAALLNRFFAKTNGLRLAVAAPALWQLTEFLRGWILTGFPWLQFGYSQLDGPMKAIAPILGVEAITFLLMALSGLFVLAVIHRKIVAGIIAVAILLLPWPIRHYQWYSLLSEKTVDVALIQGNIPQSLKWDPKMLSETMDIYMGNSLPYIGKMPIIIWPESAIPSLESYQRHFLTKLDELLRNQHTSLITGIVDERAVGDRDKIYNSVIVLGDKIPYQYPAAIRYDKYHLVPFGEFVPLESLLRPLAPFFNLPMSSFSRGNYIQPQLSVAGYNLTTAICYEIILGEQVRANFKPDTEFLLTVSNDAWFGGSIGPWQHFQMARMRSLELGRPLLRGTNNGITAVIRPDGEVQAALPQFTRNVLVAKVTPATGITPYARWGNWPLWIITVSFSLFALTYNRRKS</sequence>
<gene>
    <name evidence="1" type="primary">lnt</name>
    <name type="ordered locus">plu1308</name>
</gene>